<feature type="chain" id="PRO_0000050644" description="Probable fructoselysine utilization operon transcriptional repressor">
    <location>
        <begin position="1"/>
        <end position="243"/>
    </location>
</feature>
<feature type="domain" description="HTH gntR-type" evidence="2">
    <location>
        <begin position="10"/>
        <end position="78"/>
    </location>
</feature>
<feature type="DNA-binding region" description="H-T-H motif" evidence="2">
    <location>
        <begin position="38"/>
        <end position="57"/>
    </location>
</feature>
<accession>Q83PX4</accession>
<protein>
    <recommendedName>
        <fullName evidence="1">Probable fructoselysine utilization operon transcriptional repressor</fullName>
    </recommendedName>
    <alternativeName>
        <fullName evidence="1">HTH-type transcriptional regulator FrlR</fullName>
    </alternativeName>
</protein>
<dbReference type="EMBL" id="AE005674">
    <property type="protein sequence ID" value="AAN44855.1"/>
    <property type="status" value="ALT_INIT"/>
    <property type="molecule type" value="Genomic_DNA"/>
</dbReference>
<dbReference type="EMBL" id="AE014073">
    <property type="protein sequence ID" value="AAP19323.1"/>
    <property type="status" value="ALT_INIT"/>
    <property type="molecule type" value="Genomic_DNA"/>
</dbReference>
<dbReference type="RefSeq" id="WP_005052755.1">
    <property type="nucleotide sequence ID" value="NZ_WPGW01000003.1"/>
</dbReference>
<dbReference type="SMR" id="Q83PX4"/>
<dbReference type="STRING" id="198214.SF3393"/>
<dbReference type="PaxDb" id="198214-SF3393"/>
<dbReference type="KEGG" id="sfl:SF3393"/>
<dbReference type="KEGG" id="sfx:S4369"/>
<dbReference type="PATRIC" id="fig|198214.7.peg.4006"/>
<dbReference type="HOGENOM" id="CLU_063236_8_2_6"/>
<dbReference type="UniPathway" id="UPA00784"/>
<dbReference type="Proteomes" id="UP000001006">
    <property type="component" value="Chromosome"/>
</dbReference>
<dbReference type="Proteomes" id="UP000002673">
    <property type="component" value="Chromosome"/>
</dbReference>
<dbReference type="GO" id="GO:0003677">
    <property type="term" value="F:DNA binding"/>
    <property type="evidence" value="ECO:0007669"/>
    <property type="project" value="UniProtKB-KW"/>
</dbReference>
<dbReference type="GO" id="GO:0003700">
    <property type="term" value="F:DNA-binding transcription factor activity"/>
    <property type="evidence" value="ECO:0007669"/>
    <property type="project" value="InterPro"/>
</dbReference>
<dbReference type="GO" id="GO:0045892">
    <property type="term" value="P:negative regulation of DNA-templated transcription"/>
    <property type="evidence" value="ECO:0007669"/>
    <property type="project" value="TreeGrafter"/>
</dbReference>
<dbReference type="CDD" id="cd07377">
    <property type="entry name" value="WHTH_GntR"/>
    <property type="match status" value="1"/>
</dbReference>
<dbReference type="FunFam" id="1.10.10.10:FF:000079">
    <property type="entry name" value="GntR family transcriptional regulator"/>
    <property type="match status" value="1"/>
</dbReference>
<dbReference type="Gene3D" id="3.40.1410.10">
    <property type="entry name" value="Chorismate lyase-like"/>
    <property type="match status" value="1"/>
</dbReference>
<dbReference type="Gene3D" id="1.10.10.10">
    <property type="entry name" value="Winged helix-like DNA-binding domain superfamily/Winged helix DNA-binding domain"/>
    <property type="match status" value="1"/>
</dbReference>
<dbReference type="InterPro" id="IPR050679">
    <property type="entry name" value="Bact_HTH_transcr_reg"/>
</dbReference>
<dbReference type="InterPro" id="IPR028978">
    <property type="entry name" value="Chorismate_lyase_/UTRA_dom_sf"/>
</dbReference>
<dbReference type="InterPro" id="IPR000524">
    <property type="entry name" value="Tscrpt_reg_HTH_GntR"/>
</dbReference>
<dbReference type="InterPro" id="IPR011663">
    <property type="entry name" value="UTRA"/>
</dbReference>
<dbReference type="InterPro" id="IPR036388">
    <property type="entry name" value="WH-like_DNA-bd_sf"/>
</dbReference>
<dbReference type="InterPro" id="IPR036390">
    <property type="entry name" value="WH_DNA-bd_sf"/>
</dbReference>
<dbReference type="NCBIfam" id="NF008491">
    <property type="entry name" value="PRK11402.1"/>
    <property type="match status" value="1"/>
</dbReference>
<dbReference type="PANTHER" id="PTHR44846">
    <property type="entry name" value="MANNOSYL-D-GLYCERATE TRANSPORT/METABOLISM SYSTEM REPRESSOR MNGR-RELATED"/>
    <property type="match status" value="1"/>
</dbReference>
<dbReference type="PANTHER" id="PTHR44846:SF1">
    <property type="entry name" value="MANNOSYL-D-GLYCERATE TRANSPORT_METABOLISM SYSTEM REPRESSOR MNGR-RELATED"/>
    <property type="match status" value="1"/>
</dbReference>
<dbReference type="Pfam" id="PF00392">
    <property type="entry name" value="GntR"/>
    <property type="match status" value="1"/>
</dbReference>
<dbReference type="Pfam" id="PF07702">
    <property type="entry name" value="UTRA"/>
    <property type="match status" value="1"/>
</dbReference>
<dbReference type="PRINTS" id="PR00035">
    <property type="entry name" value="HTHGNTR"/>
</dbReference>
<dbReference type="SMART" id="SM00345">
    <property type="entry name" value="HTH_GNTR"/>
    <property type="match status" value="1"/>
</dbReference>
<dbReference type="SMART" id="SM00866">
    <property type="entry name" value="UTRA"/>
    <property type="match status" value="1"/>
</dbReference>
<dbReference type="SUPFAM" id="SSF64288">
    <property type="entry name" value="Chorismate lyase-like"/>
    <property type="match status" value="1"/>
</dbReference>
<dbReference type="SUPFAM" id="SSF46785">
    <property type="entry name" value="Winged helix' DNA-binding domain"/>
    <property type="match status" value="1"/>
</dbReference>
<dbReference type="PROSITE" id="PS50949">
    <property type="entry name" value="HTH_GNTR"/>
    <property type="match status" value="1"/>
</dbReference>
<keyword id="KW-0238">DNA-binding</keyword>
<keyword id="KW-1185">Reference proteome</keyword>
<keyword id="KW-0678">Repressor</keyword>
<keyword id="KW-0804">Transcription</keyword>
<keyword id="KW-0805">Transcription regulation</keyword>
<name>FRLR_SHIFL</name>
<proteinExistence type="inferred from homology"/>
<gene>
    <name type="primary">frlR</name>
    <name type="ordered locus">SF3393</name>
    <name type="ordered locus">S4369</name>
</gene>
<evidence type="ECO:0000250" key="1">
    <source>
        <dbReference type="UniProtKB" id="P45544"/>
    </source>
</evidence>
<evidence type="ECO:0000255" key="2">
    <source>
        <dbReference type="PROSITE-ProRule" id="PRU00307"/>
    </source>
</evidence>
<evidence type="ECO:0000305" key="3"/>
<sequence>MSATDRYSHQLLYATVRQRLLDDIAQGVYQAGQQIPTENELCTQYNVSRITIRKAISDLVADGVLIRWQGKGTFVQSQKVENALLTVSGFTDFGVSQGKSTKEKVIEQERVSAAPFCEKLNIPGNSEVFHLCRVMYLDKEPLFIDSSWIPLSRYPDFDEIYVEGSSTYQLFQERFDTRVVSDKKTIDIFAATRPQAKWLKCELGEPLFRISKIAFDQNDKPVHVSELFCRANRITLTIDNKRH</sequence>
<comment type="function">
    <text evidence="1">May regulate the transcription of the frlABCDR operon, involved in the utilization of fructoselysine and psicoselysine.</text>
</comment>
<comment type="pathway">
    <text evidence="1">Carbohydrate metabolism; fructoselysine degradation [regulation].</text>
</comment>
<comment type="sequence caution" evidence="3">
    <conflict type="erroneous initiation">
        <sequence resource="EMBL-CDS" id="AAN44855"/>
    </conflict>
</comment>
<comment type="sequence caution" evidence="3">
    <conflict type="erroneous initiation">
        <sequence resource="EMBL-CDS" id="AAP19323"/>
    </conflict>
</comment>
<reference key="1">
    <citation type="journal article" date="2002" name="Nucleic Acids Res.">
        <title>Genome sequence of Shigella flexneri 2a: insights into pathogenicity through comparison with genomes of Escherichia coli K12 and O157.</title>
        <authorList>
            <person name="Jin Q."/>
            <person name="Yuan Z."/>
            <person name="Xu J."/>
            <person name="Wang Y."/>
            <person name="Shen Y."/>
            <person name="Lu W."/>
            <person name="Wang J."/>
            <person name="Liu H."/>
            <person name="Yang J."/>
            <person name="Yang F."/>
            <person name="Zhang X."/>
            <person name="Zhang J."/>
            <person name="Yang G."/>
            <person name="Wu H."/>
            <person name="Qu D."/>
            <person name="Dong J."/>
            <person name="Sun L."/>
            <person name="Xue Y."/>
            <person name="Zhao A."/>
            <person name="Gao Y."/>
            <person name="Zhu J."/>
            <person name="Kan B."/>
            <person name="Ding K."/>
            <person name="Chen S."/>
            <person name="Cheng H."/>
            <person name="Yao Z."/>
            <person name="He B."/>
            <person name="Chen R."/>
            <person name="Ma D."/>
            <person name="Qiang B."/>
            <person name="Wen Y."/>
            <person name="Hou Y."/>
            <person name="Yu J."/>
        </authorList>
    </citation>
    <scope>NUCLEOTIDE SEQUENCE [LARGE SCALE GENOMIC DNA]</scope>
    <source>
        <strain>301 / Serotype 2a</strain>
    </source>
</reference>
<reference key="2">
    <citation type="journal article" date="2003" name="Infect. Immun.">
        <title>Complete genome sequence and comparative genomics of Shigella flexneri serotype 2a strain 2457T.</title>
        <authorList>
            <person name="Wei J."/>
            <person name="Goldberg M.B."/>
            <person name="Burland V."/>
            <person name="Venkatesan M.M."/>
            <person name="Deng W."/>
            <person name="Fournier G."/>
            <person name="Mayhew G.F."/>
            <person name="Plunkett G. III"/>
            <person name="Rose D.J."/>
            <person name="Darling A."/>
            <person name="Mau B."/>
            <person name="Perna N.T."/>
            <person name="Payne S.M."/>
            <person name="Runyen-Janecky L.J."/>
            <person name="Zhou S."/>
            <person name="Schwartz D.C."/>
            <person name="Blattner F.R."/>
        </authorList>
    </citation>
    <scope>NUCLEOTIDE SEQUENCE [LARGE SCALE GENOMIC DNA]</scope>
    <source>
        <strain>ATCC 700930 / 2457T / Serotype 2a</strain>
    </source>
</reference>
<organism>
    <name type="scientific">Shigella flexneri</name>
    <dbReference type="NCBI Taxonomy" id="623"/>
    <lineage>
        <taxon>Bacteria</taxon>
        <taxon>Pseudomonadati</taxon>
        <taxon>Pseudomonadota</taxon>
        <taxon>Gammaproteobacteria</taxon>
        <taxon>Enterobacterales</taxon>
        <taxon>Enterobacteriaceae</taxon>
        <taxon>Shigella</taxon>
    </lineage>
</organism>